<proteinExistence type="evidence at protein level"/>
<organism>
    <name type="scientific">Aspergillus terreus (strain NIH 2624 / FGSC A1156)</name>
    <dbReference type="NCBI Taxonomy" id="341663"/>
    <lineage>
        <taxon>Eukaryota</taxon>
        <taxon>Fungi</taxon>
        <taxon>Dikarya</taxon>
        <taxon>Ascomycota</taxon>
        <taxon>Pezizomycotina</taxon>
        <taxon>Eurotiomycetes</taxon>
        <taxon>Eurotiomycetidae</taxon>
        <taxon>Eurotiales</taxon>
        <taxon>Aspergillaceae</taxon>
        <taxon>Aspergillus</taxon>
        <taxon>Aspergillus subgen. Circumdati</taxon>
    </lineage>
</organism>
<name>TERA_ASPTN</name>
<sequence length="2081" mass="227018">MAGSLKLYVFGDEAGDFAGPLQKLCEQRKEVLFLHFLDELNKVLRDEVRRQPRDVRVQIPEFTDVLDLVRHYRDSGSRNQILETTLTLAFRIGVKVHGAAQRLSKHGDAAVAQSWTTLIIGAQKEASIAALAEFNESKGIPHANQAYISANSKDVVSISGPPETVTSLLQHSEYLQKFRTISLDIFAPFHAPHLYNDDDVAEVLQPFSGKNEKRKLFIPVISGLGTLYSPDMDVETLMADVVRDILIRPLLFENVMKTVTETTTASSHQNCQIFSVGPSQAINSLASTLRADTSLNVTTEGPIHTGSPDYEPLNGAQKIAIVGMAGRFPNSDDLESFWSTLQQGLDLHRRVPPDRFDIDAHYDPTGKKLNSTHTPYGCFIEKPGLFDPRFFNMSQREAYQTDPMGRLALVTAYEALEMSGFVPNRTPSSMLDRIGTFYGQTSDDWRTLNAAEKIDMYYIPGTIRAFATGRINYHFKFKGPSYNVDTACSSSFAAIQLACTSLLAKECDTALAGGLNVMTTPDLFAGLSRAHFLSKTGSCKTFDDGADGFCRGDGVGTVVLKRLEDAEADNDPILAVVLGTATNHSSEAVSITRPHGPAQEALYRKILKHTGVDPVDVSYVEMHGTGTQAGDGTEMKSITNVFAPRDKGRRQPDQLIHLGALKANIGHGEASAGVASLIKTVIMMQKNAIPPHVGIKTTMNKTFPHDLNERGVRIAFKETPWVRPDGGKRRAYLNNFGASGGNTGLLLEDRPAPVSTRASDPRTSFVVSLSAKSAYSLDQNINRLATYLEGNPDTSLPALSYTTTARRVHYPHRVSYAVRSIPETIKSLRSAQSKAIKPDPASSGKIAFLFTGQGSHYTALGKQLFEDCQTFRNDLVEFNRIGQKQGFPTFLPLIDGSEDVASLSPVALQLGQSCIQIALARLWKSWGITPSSVLGHSLGEYAALNVAGVLSASDTIYLVGRRAQLLEELCTPGSHKMLAIAASVSSVKEILGDKDIEVACINGPNETVISGLAEQMESYSKTLKATDVKCSLLSTAYAFHSAQIQVIVEQYRKVASSVHFGPPNVPVISPLLGDVVTDGNVFGPDYLCRQAREAVNFMGALKAAESKGVVDNNVIWLEIGPAPVCSAFVKSSLGSKALTLPSLRKQEDVWKTLSGTLSNLYSKGLTIEWEEVHREYEASHTVLALPSYCFEEKNYWLDYHNNWCLTKGQKLVESAAPKRRGRHLLTPSVQKVIKEDFGQTKITVVAESDLSDPDLNHAVTGHLVNGSALCPAGVYAESALTLAGYIYHRVKKTEDIGMDVRALEIVKPLIAKGRDQKEKQVFRITATADQPLKLVKISYNSVSADGSLGVLHATCHVEYGDIKTWRAEWSRLAYLVRSRIDVMNDGVKGRQYQKLDRKAAYEGFSGFVEYDKQYHGMKEVIMDQKNLEATSILEFQPSNDYGEFEIDPRFIDNISHLSGFILNGSGATDTRKQVFVSHGWDHLQIAEPLSSSKSYSNYVKMHEIEKATMAGDVYIFDGEEMVALVGGVKFKAIPRAVINQLLPPVKGSKALEKSAPRQNPKATATKTTQKPQAPVPVPQKQNKAIIDDFLALLCEELGVELSELQDDTAFADIGLDSLMSLSITGRMREELDLEAIPSSVFTDYPTVGQVKELILKLAGSSSDENTTDTPDEEEDPATADADNTEMIRENPLESVSPNVSSSEAMDGFLAIVCEEVGVDLEELLEVQNFAGAGVDSLMSLTITGRAREDLDMDIPSSFFVDYPTVDQARLAIASLMGGGDQTGATTPYSGSDDAKSSTSSLTAGSVLTPDDDMDAQDISQLTRPATSIVLQGSLKTASKTLFLLPDGSGSATSYAALPRVSPDTCVVALNCPFMKTPSEYTTGIEGVAALYLSEIRRRQPEGPYVLGGWSAGGILAYAVACQLIEMGEEIEDLFLIDSPCPINLQPLPSELLHFIDSLGLLGAQGSAPKWLIPHFEASIKNLTAFVPHAMDPDEAPRTHIIWARDGLVSESDEKQFPRSDAEAKSVKFLLDGRQNLGTYGWEKLIGSENISVDFIEGNHFTMMREPKVNQLPSILDRLIGA</sequence>
<feature type="chain" id="PRO_0000437590" description="Non-reducing polyketide synthase terA">
    <location>
        <begin position="1"/>
        <end position="2081"/>
    </location>
</feature>
<feature type="domain" description="Ketosynthase family 3 (KS3)" evidence="5">
    <location>
        <begin position="316"/>
        <end position="749"/>
    </location>
</feature>
<feature type="domain" description="PKS/mFAS DH" evidence="6">
    <location>
        <begin position="1230"/>
        <end position="1539"/>
    </location>
</feature>
<feature type="domain" description="Carrier 1" evidence="4">
    <location>
        <begin position="1580"/>
        <end position="1658"/>
    </location>
</feature>
<feature type="domain" description="Carrier 2" evidence="4">
    <location>
        <begin position="1699"/>
        <end position="1776"/>
    </location>
</feature>
<feature type="region of interest" description="N-terminal acylcarrier protein transacylase (SAT) domain (SAT)" evidence="3">
    <location>
        <begin position="85"/>
        <end position="190"/>
    </location>
</feature>
<feature type="region of interest" description="Malonyl-CoA:ACP transacylase (MAT) domain" evidence="3">
    <location>
        <begin position="849"/>
        <end position="1147"/>
    </location>
</feature>
<feature type="region of interest" description="N-terminal hotdog fold" evidence="6">
    <location>
        <begin position="1230"/>
        <end position="1364"/>
    </location>
</feature>
<feature type="region of interest" description="Product template (PT) domain" evidence="3">
    <location>
        <begin position="1259"/>
        <end position="1536"/>
    </location>
</feature>
<feature type="region of interest" description="C-terminal hotdog fold" evidence="6">
    <location>
        <begin position="1392"/>
        <end position="1539"/>
    </location>
</feature>
<feature type="region of interest" description="Disordered" evidence="7">
    <location>
        <begin position="1549"/>
        <end position="1578"/>
    </location>
</feature>
<feature type="region of interest" description="Disordered" evidence="7">
    <location>
        <begin position="1659"/>
        <end position="1700"/>
    </location>
</feature>
<feature type="region of interest" description="Disordered" evidence="7">
    <location>
        <begin position="1783"/>
        <end position="1809"/>
    </location>
</feature>
<feature type="region of interest" description="Thioesterase (TE) domain" evidence="3">
    <location>
        <begin position="1840"/>
        <end position="2070"/>
    </location>
</feature>
<feature type="compositionally biased region" description="Low complexity" evidence="7">
    <location>
        <begin position="1558"/>
        <end position="1572"/>
    </location>
</feature>
<feature type="compositionally biased region" description="Acidic residues" evidence="7">
    <location>
        <begin position="1665"/>
        <end position="1677"/>
    </location>
</feature>
<feature type="active site" description="For beta-ketoacyl synthase activity" evidence="5">
    <location>
        <position position="488"/>
    </location>
</feature>
<feature type="active site" description="For beta-ketoacyl synthase activity" evidence="5">
    <location>
        <position position="623"/>
    </location>
</feature>
<feature type="active site" description="For beta-ketoacyl synthase activity" evidence="5">
    <location>
        <position position="667"/>
    </location>
</feature>
<feature type="active site" description="Proton acceptor; for dehydratase activity" evidence="6">
    <location>
        <position position="1262"/>
    </location>
</feature>
<feature type="active site" description="Proton donor; for dehydratase activity" evidence="6">
    <location>
        <position position="1452"/>
    </location>
</feature>
<feature type="modified residue" description="O-(pantetheine 4'-phosphoryl)serine" evidence="4">
    <location>
        <position position="1617"/>
    </location>
</feature>
<feature type="modified residue" description="O-(pantetheine 4'-phosphoryl)serine" evidence="4">
    <location>
        <position position="1736"/>
    </location>
</feature>
<reference key="1">
    <citation type="submission" date="2005-09" db="EMBL/GenBank/DDBJ databases">
        <title>Annotation of the Aspergillus terreus NIH2624 genome.</title>
        <authorList>
            <person name="Birren B.W."/>
            <person name="Lander E.S."/>
            <person name="Galagan J.E."/>
            <person name="Nusbaum C."/>
            <person name="Devon K."/>
            <person name="Henn M."/>
            <person name="Ma L.-J."/>
            <person name="Jaffe D.B."/>
            <person name="Butler J."/>
            <person name="Alvarez P."/>
            <person name="Gnerre S."/>
            <person name="Grabherr M."/>
            <person name="Kleber M."/>
            <person name="Mauceli E.W."/>
            <person name="Brockman W."/>
            <person name="Rounsley S."/>
            <person name="Young S.K."/>
            <person name="LaButti K."/>
            <person name="Pushparaj V."/>
            <person name="DeCaprio D."/>
            <person name="Crawford M."/>
            <person name="Koehrsen M."/>
            <person name="Engels R."/>
            <person name="Montgomery P."/>
            <person name="Pearson M."/>
            <person name="Howarth C."/>
            <person name="Larson L."/>
            <person name="Luoma S."/>
            <person name="White J."/>
            <person name="Alvarado L."/>
            <person name="Kodira C.D."/>
            <person name="Zeng Q."/>
            <person name="Oleary S."/>
            <person name="Yandava C."/>
            <person name="Denning D.W."/>
            <person name="Nierman W.C."/>
            <person name="Milne T."/>
            <person name="Madden K."/>
        </authorList>
    </citation>
    <scope>NUCLEOTIDE SEQUENCE [LARGE SCALE GENOMIC DNA]</scope>
    <source>
        <strain>NIH 2624 / FGSC A1156</strain>
    </source>
</reference>
<reference key="2">
    <citation type="journal article" date="2004" name="Cell. Mol. Life Sci.">
        <title>Terrein: a new melanogenesis inhibitor and its mechanism.</title>
        <authorList>
            <person name="Park S.H."/>
            <person name="Kim D.S."/>
            <person name="Kim W.G."/>
            <person name="Ryoo I.J."/>
            <person name="Lee D.H."/>
            <person name="Huh C.H."/>
            <person name="Youn S.W."/>
            <person name="Yoo I.D."/>
            <person name="Park K.C."/>
        </authorList>
    </citation>
    <scope>BIOTECHNOLOGY</scope>
</reference>
<reference key="3">
    <citation type="journal article" date="2005" name="Bioorg. Med. Chem. Lett.">
        <title>Synthesis and melanin biosynthesis inhibitory activity of (+/-)-terrein produced by Penicillium sp. 20135.</title>
        <authorList>
            <person name="Lee S."/>
            <person name="Kim W.G."/>
            <person name="Kim E."/>
            <person name="Ryoo I.J."/>
            <person name="Lee H.K."/>
            <person name="Kim J.N."/>
            <person name="Jung S.H."/>
            <person name="Yoo I.D."/>
        </authorList>
    </citation>
    <scope>BIOTECHNOLOGY</scope>
</reference>
<reference key="4">
    <citation type="journal article" date="2008" name="J. Antibiot.">
        <title>A new terrein glucoside, a novel inhibitor of angiogenin secretion in tumor angiogenesis.</title>
        <authorList>
            <person name="Arakawa M."/>
            <person name="Someno T."/>
            <person name="Kawada M."/>
            <person name="Ikeda D."/>
        </authorList>
    </citation>
    <scope>BIOTECHNOLOGY</scope>
</reference>
<reference key="5">
    <citation type="journal article" date="2008" name="J. Endod.">
        <title>Terrein reduces pulpal inflammation in human dental pulp cells.</title>
        <authorList>
            <person name="Lee J.C."/>
            <person name="Yu M.K."/>
            <person name="Lee R."/>
            <person name="Lee Y.H."/>
            <person name="Jeon J.G."/>
            <person name="Lee M.H."/>
            <person name="Jhee E.C."/>
            <person name="Yoo I.D."/>
            <person name="Yi H.K."/>
        </authorList>
    </citation>
    <scope>BIOTECHNOLOGY</scope>
</reference>
<reference key="6">
    <citation type="journal article" date="2009" name="Exp. Dermatol.">
        <title>Long-term suppression of tyrosinase by terrein via tyrosinase degradation and its decreased expression.</title>
        <authorList>
            <person name="Park S.H."/>
            <person name="Kim D.S."/>
            <person name="Lee H.K."/>
            <person name="Kwon S.B."/>
            <person name="Lee S."/>
            <person name="Ryoo I.J."/>
            <person name="Kim W.G."/>
            <person name="Yoo I.D."/>
            <person name="Park K.C."/>
        </authorList>
    </citation>
    <scope>BIOTECHNOLOGY</scope>
</reference>
<reference key="7">
    <citation type="journal article" date="2010" name="Cell Biochem. Funct.">
        <title>Enhancement of osteoblast biocompatibility on titanium surface with Terrein treatment.</title>
        <authorList>
            <person name="Lee Y.H."/>
            <person name="Lee N.H."/>
            <person name="Bhattarai G."/>
            <person name="Oh Y.T."/>
            <person name="Yu M.K."/>
            <person name="Yoo I.D."/>
            <person name="Jhee E.C."/>
            <person name="Yi H.K."/>
        </authorList>
    </citation>
    <scope>BIOTECHNOLOGY</scope>
</reference>
<reference key="8">
    <citation type="journal article" date="2013" name="Oncol. Rep.">
        <title>Terrein induces apoptosis in HeLa human cervical carcinoma cells through p53 and ERK regulation.</title>
        <authorList>
            <person name="Porameesanaporn Y."/>
            <person name="Uthaisang-Tanechpongtamb W."/>
            <person name="Jarintanan F."/>
            <person name="Jongrungruangchok S."/>
            <person name="Thanomsub Wongsatayanon B."/>
        </authorList>
    </citation>
    <scope>BIOTECHNOLOGY</scope>
</reference>
<reference key="9">
    <citation type="journal article" date="2014" name="Chem. Biol.">
        <title>Terrein biosynthesis in Aspergillus terreus and its impact on phytotoxicity.</title>
        <authorList>
            <person name="Zaehle C."/>
            <person name="Gressler M."/>
            <person name="Shelest E."/>
            <person name="Geib E."/>
            <person name="Hertweck C."/>
            <person name="Brock M."/>
        </authorList>
    </citation>
    <scope>FUNCTION</scope>
    <scope>DISRUPTION PHENOTYPE</scope>
    <scope>DOMAIN</scope>
</reference>
<reference key="10">
    <citation type="journal article" date="2014" name="Int. J. Mol. Med.">
        <title>The marine-derived fungal metabolite, terrein, inhibits cell proliferation and induces cell cycle arrest in human ovarian cancer cells.</title>
        <authorList>
            <person name="Chen Y.F."/>
            <person name="Wang S.Y."/>
            <person name="Shen H."/>
            <person name="Yao X.F."/>
            <person name="Zhang F.L."/>
            <person name="Lai D."/>
        </authorList>
    </citation>
    <scope>BIOTECHNOLOGY</scope>
</reference>
<reference key="11">
    <citation type="journal article" date="2015" name="Cell Biochem. Funct.">
        <title>Terrein reduces age-related inflammation induced by oxidative stress through Nrf2/ERK1/2/HO-1 signalling in aged HDF cells.</title>
        <authorList>
            <person name="Lee Y.H."/>
            <person name="Lee S.J."/>
            <person name="Jung J.E."/>
            <person name="Kim J.S."/>
            <person name="Lee N.H."/>
            <person name="Yi H.K."/>
        </authorList>
    </citation>
    <scope>BIOTECHNOLOGY</scope>
</reference>
<reference key="12">
    <citation type="journal article" date="2015" name="Elife">
        <title>Phytotoxin production in Aspergillus terreus is regulated by independent environmental signals.</title>
        <authorList>
            <person name="Gressler M."/>
            <person name="Meyer F."/>
            <person name="Heine D."/>
            <person name="Hortschansky P."/>
            <person name="Hertweck C."/>
            <person name="Brock M."/>
        </authorList>
    </citation>
    <scope>FUNCTION</scope>
    <scope>INDUCTION</scope>
</reference>
<reference key="13">
    <citation type="journal article" date="2015" name="Front. Microbiol.">
        <title>A new high-performance heterologous fungal expression system based on regulatory elements from the Aspergillus terreus terrein gene cluster.</title>
        <authorList>
            <person name="Gressler M."/>
            <person name="Hortschansky P."/>
            <person name="Geib E."/>
            <person name="Brock M."/>
        </authorList>
    </citation>
    <scope>INDUCTION</scope>
</reference>
<reference key="14">
    <citation type="journal article" date="2015" name="Oncol. Rep.">
        <title>(+)-Terrein inhibits human hepatoma Bel-7402 proliferation through cell cycle arrest.</title>
        <authorList>
            <person name="Zhang F."/>
            <person name="Mijiti M."/>
            <person name="Ding W."/>
            <person name="Song J."/>
            <person name="Yin Y."/>
            <person name="Sun W."/>
            <person name="Li Z."/>
        </authorList>
    </citation>
    <scope>BIOTECHNOLOGY</scope>
</reference>
<reference key="15">
    <citation type="journal article" date="2016" name="Anticancer Res.">
        <title>Synthetic terrein inhibits progression of head and neck cancer by suppressing angiogenin production.</title>
        <authorList>
            <person name="Shibata A."/>
            <person name="Ibaragi S."/>
            <person name="Mandai H."/>
            <person name="Tsumura T."/>
            <person name="Kishimoto K."/>
            <person name="Okui T."/>
            <person name="Hassan N.M."/>
            <person name="Shimo T."/>
            <person name="Omori K."/>
            <person name="Hu G.F."/>
            <person name="Takashiba S."/>
            <person name="Suga S."/>
            <person name="Sasaki A."/>
        </authorList>
    </citation>
    <scope>BIOTECHNOLOGY</scope>
</reference>
<gene>
    <name evidence="22" type="primary">terA</name>
    <name type="ORF">ATEG_00145</name>
</gene>
<protein>
    <recommendedName>
        <fullName evidence="22">Non-reducing polyketide synthase terA</fullName>
        <ecNumber evidence="15">2.3.1.-</ecNumber>
    </recommendedName>
    <alternativeName>
        <fullName evidence="22">Terrein biosynthesis cluster protein terA</fullName>
    </alternativeName>
</protein>
<evidence type="ECO:0000250" key="1">
    <source>
        <dbReference type="UniProtKB" id="Q5ATJ7"/>
    </source>
</evidence>
<evidence type="ECO:0000250" key="2">
    <source>
        <dbReference type="UniProtKB" id="Q5B0D0"/>
    </source>
</evidence>
<evidence type="ECO:0000255" key="3"/>
<evidence type="ECO:0000255" key="4">
    <source>
        <dbReference type="PROSITE-ProRule" id="PRU00258"/>
    </source>
</evidence>
<evidence type="ECO:0000255" key="5">
    <source>
        <dbReference type="PROSITE-ProRule" id="PRU01348"/>
    </source>
</evidence>
<evidence type="ECO:0000255" key="6">
    <source>
        <dbReference type="PROSITE-ProRule" id="PRU01363"/>
    </source>
</evidence>
<evidence type="ECO:0000256" key="7">
    <source>
        <dbReference type="SAM" id="MobiDB-lite"/>
    </source>
</evidence>
<evidence type="ECO:0000269" key="8">
    <source>
    </source>
</evidence>
<evidence type="ECO:0000269" key="9">
    <source>
    </source>
</evidence>
<evidence type="ECO:0000269" key="10">
    <source>
    </source>
</evidence>
<evidence type="ECO:0000269" key="11">
    <source>
    </source>
</evidence>
<evidence type="ECO:0000269" key="12">
    <source>
    </source>
</evidence>
<evidence type="ECO:0000269" key="13">
    <source>
    </source>
</evidence>
<evidence type="ECO:0000269" key="14">
    <source>
    </source>
</evidence>
<evidence type="ECO:0000269" key="15">
    <source>
    </source>
</evidence>
<evidence type="ECO:0000269" key="16">
    <source>
    </source>
</evidence>
<evidence type="ECO:0000269" key="17">
    <source>
    </source>
</evidence>
<evidence type="ECO:0000269" key="18">
    <source>
    </source>
</evidence>
<evidence type="ECO:0000269" key="19">
    <source>
    </source>
</evidence>
<evidence type="ECO:0000269" key="20">
    <source>
    </source>
</evidence>
<evidence type="ECO:0000269" key="21">
    <source>
    </source>
</evidence>
<evidence type="ECO:0000303" key="22">
    <source>
    </source>
</evidence>
<accession>Q0D1N9</accession>
<keyword id="KW-0511">Multifunctional enzyme</keyword>
<keyword id="KW-0596">Phosphopantetheine</keyword>
<keyword id="KW-0597">Phosphoprotein</keyword>
<keyword id="KW-1185">Reference proteome</keyword>
<keyword id="KW-0677">Repeat</keyword>
<keyword id="KW-0808">Transferase</keyword>
<comment type="function">
    <text evidence="15 19">Non-reducing polyketide synthase; part of the gene cluster that mediates the biosynthesis of terrein, a fungal metabolite with ecological, antimicrobial, antiproliferative, and antioxidative activities (PubMed:24816227, PubMed:26173180). The first step in the pathway is performed by the polyketide synthase terA that produces 4-hydroxy-6-methylpyranon (4-HMP), orsellinic acid (OA), and 2,3-dehydro-6-hydroxymellein (2,3-dehydro-6-HM) by condensing acetyl-CoA with two, three, or four malonyl-CoA units, respectively (PubMed:24816227). 4-HMP and OA are not pathway intermediates, but are rather shunt or side products (PubMed:24816227). 2,3-dehydro-6-HM is further converted to 6-hydroxymellein (6-HM) by the 6-hydroxymellein synthase terB (PubMed:24816227). The monooxygenases terC and terD, the multicopper oxidase terE and the Kelch-like protein terF are then involved in the transformation of 6-HM to terrein (PubMed:24816227). Even if they are co-regulated with the other terrein cluster genes, terH and terI seem to be dispensable for terrein production; whereas one or both of the 2 transporters terG and terJ are probably required for efficient secretion of metabolites (PubMed:24816227).</text>
</comment>
<comment type="catalytic activity">
    <reaction evidence="15">
        <text>3 malonyl-CoA + acetyl-CoA + 2 H(+) = orsellinate + 3 CO2 + 4 CoA</text>
        <dbReference type="Rhea" id="RHEA:62972"/>
        <dbReference type="ChEBI" id="CHEBI:15378"/>
        <dbReference type="ChEBI" id="CHEBI:16162"/>
        <dbReference type="ChEBI" id="CHEBI:16526"/>
        <dbReference type="ChEBI" id="CHEBI:57287"/>
        <dbReference type="ChEBI" id="CHEBI:57288"/>
        <dbReference type="ChEBI" id="CHEBI:57384"/>
    </reaction>
    <physiologicalReaction direction="left-to-right" evidence="15">
        <dbReference type="Rhea" id="RHEA:62973"/>
    </physiologicalReaction>
</comment>
<comment type="pathway">
    <text evidence="15 19">Secondary metabolite biosynthesis.</text>
</comment>
<comment type="induction">
    <text evidence="18 19">Expression is induced by methionine (PubMed:26173180). Nitrogen starvation induces expression of terA and promotes terrein production during fruit infection, via regulation by areA and atfA (PubMed:26173180). Iron limitation acts as a third independent signal for terrein cluster induction via the iron response regulator hapX (PubMed:26173180). Finally, expression is under the control of the terrein cluster-specific transcription factor terR (PubMed:25852654).</text>
</comment>
<comment type="domain">
    <text evidence="2">Multidomain protein; including a starter unit:ACP transacylase (SAT) that selects the starter unit; a ketosynthase (KS) that catalyzes repeated decarboxylative condensation to elongate the polyketide backbone; a malonyl-CoA:ACP transacylase (MAT) that selects and transfers the extender unit malonyl-CoA; a product template (PT) domain that controls the immediate cyclization regioselectivity of the reactive polyketide backbone; and an acyl-carrier protein (ACP) that serves as the tether of the growing and completed polyketide via its phosphopantetheinyl arm (By similarity).</text>
</comment>
<comment type="domain">
    <text evidence="1">The release of the polyketide chain from the non-reducing polyketide synthase is mediated by the thioesterase (TE) domain localized at the C-ter of the protein (By similarity).</text>
</comment>
<comment type="disruption phenotype">
    <text evidence="15">Impairs the production of terrein (PubMed:24816227).</text>
</comment>
<comment type="biotechnology">
    <text evidence="8 9 10 11 12 13 14 16 17 20 21">Terrein shows anticancer activity on various tumors including cervical carcinoma, ovarian cancer, and head and neck cancer (PubMed:23417151, PubMed:25318762, PubMed:25592371, PubMed:27127118). The secondary metabolite acts as angiogenesis inhibitors through the inhibition of angiogenin secretion (PubMed:18776656, PubMed:27127118). Terrein also has anti-inflammatory activity (PubMed:18358890). It shows an alleviative function of age-related inflammation characterized as an anti-oxidant and might therefore be a useful nutraceutical compound for anti-aging (PubMed:26416516). Terrein may enhance osseointegration by decreasing the level of ROS and has a potentially synergistic effect on osteoblast differentiation (PubMed:21104936). Terrein has also been shown to act as a melanogenesis inhibitor (PubMed:15558216, PubMed:15603975, PubMed:19493001).</text>
</comment>
<dbReference type="EC" id="2.3.1.-" evidence="15"/>
<dbReference type="EMBL" id="CH476594">
    <property type="protein sequence ID" value="EAU38791.1"/>
    <property type="molecule type" value="Genomic_DNA"/>
</dbReference>
<dbReference type="RefSeq" id="XP_001210231.1">
    <property type="nucleotide sequence ID" value="XM_001210231.1"/>
</dbReference>
<dbReference type="SMR" id="Q0D1N9"/>
<dbReference type="STRING" id="341663.Q0D1N9"/>
<dbReference type="ESTHER" id="aspte-AT1">
    <property type="family name" value="Thioesterase"/>
</dbReference>
<dbReference type="EnsemblFungi" id="EAU38791">
    <property type="protein sequence ID" value="EAU38791"/>
    <property type="gene ID" value="ATEG_00145"/>
</dbReference>
<dbReference type="GeneID" id="4354902"/>
<dbReference type="VEuPathDB" id="FungiDB:ATEG_00145"/>
<dbReference type="eggNOG" id="KOG1202">
    <property type="taxonomic scope" value="Eukaryota"/>
</dbReference>
<dbReference type="HOGENOM" id="CLU_000022_6_0_1"/>
<dbReference type="OMA" id="YCRGDGC"/>
<dbReference type="OrthoDB" id="329835at2759"/>
<dbReference type="Proteomes" id="UP000007963">
    <property type="component" value="Unassembled WGS sequence"/>
</dbReference>
<dbReference type="GO" id="GO:0004315">
    <property type="term" value="F:3-oxoacyl-[acyl-carrier-protein] synthase activity"/>
    <property type="evidence" value="ECO:0007669"/>
    <property type="project" value="InterPro"/>
</dbReference>
<dbReference type="GO" id="GO:0004312">
    <property type="term" value="F:fatty acid synthase activity"/>
    <property type="evidence" value="ECO:0007669"/>
    <property type="project" value="TreeGrafter"/>
</dbReference>
<dbReference type="GO" id="GO:0031177">
    <property type="term" value="F:phosphopantetheine binding"/>
    <property type="evidence" value="ECO:0007669"/>
    <property type="project" value="InterPro"/>
</dbReference>
<dbReference type="GO" id="GO:0006633">
    <property type="term" value="P:fatty acid biosynthetic process"/>
    <property type="evidence" value="ECO:0007669"/>
    <property type="project" value="InterPro"/>
</dbReference>
<dbReference type="GO" id="GO:0046189">
    <property type="term" value="P:phenol-containing compound biosynthetic process"/>
    <property type="evidence" value="ECO:0007669"/>
    <property type="project" value="UniProtKB-ARBA"/>
</dbReference>
<dbReference type="GO" id="GO:0030639">
    <property type="term" value="P:polyketide biosynthetic process"/>
    <property type="evidence" value="ECO:0007669"/>
    <property type="project" value="UniProtKB-ARBA"/>
</dbReference>
<dbReference type="GO" id="GO:0009403">
    <property type="term" value="P:toxin biosynthetic process"/>
    <property type="evidence" value="ECO:0007669"/>
    <property type="project" value="UniProtKB-ARBA"/>
</dbReference>
<dbReference type="CDD" id="cd00833">
    <property type="entry name" value="PKS"/>
    <property type="match status" value="1"/>
</dbReference>
<dbReference type="FunFam" id="3.40.366.10:FF:000002">
    <property type="entry name" value="Probable polyketide synthase 2"/>
    <property type="match status" value="1"/>
</dbReference>
<dbReference type="FunFam" id="1.10.1200.10:FF:000011">
    <property type="entry name" value="Sterigmatocystin biosynthesis polyketide synthase"/>
    <property type="match status" value="2"/>
</dbReference>
<dbReference type="FunFam" id="3.10.129.110:FF:000001">
    <property type="entry name" value="Sterigmatocystin biosynthesis polyketide synthase"/>
    <property type="match status" value="1"/>
</dbReference>
<dbReference type="FunFam" id="3.40.50.1820:FF:000116">
    <property type="entry name" value="Sterigmatocystin biosynthesis polyketide synthase"/>
    <property type="match status" value="1"/>
</dbReference>
<dbReference type="Gene3D" id="3.30.70.3290">
    <property type="match status" value="1"/>
</dbReference>
<dbReference type="Gene3D" id="3.40.47.10">
    <property type="match status" value="1"/>
</dbReference>
<dbReference type="Gene3D" id="1.10.1200.10">
    <property type="entry name" value="ACP-like"/>
    <property type="match status" value="2"/>
</dbReference>
<dbReference type="Gene3D" id="3.40.50.1820">
    <property type="entry name" value="alpha/beta hydrolase"/>
    <property type="match status" value="1"/>
</dbReference>
<dbReference type="Gene3D" id="3.30.70.250">
    <property type="entry name" value="Malonyl-CoA ACP transacylase, ACP-binding"/>
    <property type="match status" value="1"/>
</dbReference>
<dbReference type="Gene3D" id="3.40.366.10">
    <property type="entry name" value="Malonyl-Coenzyme A Acyl Carrier Protein, domain 2"/>
    <property type="match status" value="1"/>
</dbReference>
<dbReference type="Gene3D" id="3.10.129.110">
    <property type="entry name" value="Polyketide synthase dehydratase"/>
    <property type="match status" value="1"/>
</dbReference>
<dbReference type="InterPro" id="IPR029058">
    <property type="entry name" value="AB_hydrolase_fold"/>
</dbReference>
<dbReference type="InterPro" id="IPR001227">
    <property type="entry name" value="Ac_transferase_dom_sf"/>
</dbReference>
<dbReference type="InterPro" id="IPR036736">
    <property type="entry name" value="ACP-like_sf"/>
</dbReference>
<dbReference type="InterPro" id="IPR014043">
    <property type="entry name" value="Acyl_transferase_dom"/>
</dbReference>
<dbReference type="InterPro" id="IPR016035">
    <property type="entry name" value="Acyl_Trfase/lysoPLipase"/>
</dbReference>
<dbReference type="InterPro" id="IPR018201">
    <property type="entry name" value="Ketoacyl_synth_AS"/>
</dbReference>
<dbReference type="InterPro" id="IPR014031">
    <property type="entry name" value="Ketoacyl_synth_C"/>
</dbReference>
<dbReference type="InterPro" id="IPR014030">
    <property type="entry name" value="Ketoacyl_synth_N"/>
</dbReference>
<dbReference type="InterPro" id="IPR016036">
    <property type="entry name" value="Malonyl_transacylase_ACP-bd"/>
</dbReference>
<dbReference type="InterPro" id="IPR020841">
    <property type="entry name" value="PKS_Beta-ketoAc_synthase_dom"/>
</dbReference>
<dbReference type="InterPro" id="IPR042104">
    <property type="entry name" value="PKS_dehydratase_sf"/>
</dbReference>
<dbReference type="InterPro" id="IPR049551">
    <property type="entry name" value="PKS_DH_C"/>
</dbReference>
<dbReference type="InterPro" id="IPR049900">
    <property type="entry name" value="PKS_mFAS_DH"/>
</dbReference>
<dbReference type="InterPro" id="IPR050091">
    <property type="entry name" value="PKS_NRPS_Biosynth_Enz"/>
</dbReference>
<dbReference type="InterPro" id="IPR020806">
    <property type="entry name" value="PKS_PP-bd"/>
</dbReference>
<dbReference type="InterPro" id="IPR009081">
    <property type="entry name" value="PP-bd_ACP"/>
</dbReference>
<dbReference type="InterPro" id="IPR006162">
    <property type="entry name" value="Ppantetheine_attach_site"/>
</dbReference>
<dbReference type="InterPro" id="IPR030918">
    <property type="entry name" value="PT_fungal_PKS"/>
</dbReference>
<dbReference type="InterPro" id="IPR032088">
    <property type="entry name" value="SAT"/>
</dbReference>
<dbReference type="InterPro" id="IPR001031">
    <property type="entry name" value="Thioesterase"/>
</dbReference>
<dbReference type="InterPro" id="IPR016039">
    <property type="entry name" value="Thiolase-like"/>
</dbReference>
<dbReference type="NCBIfam" id="TIGR04532">
    <property type="entry name" value="PT_fungal_PKS"/>
    <property type="match status" value="1"/>
</dbReference>
<dbReference type="PANTHER" id="PTHR43775">
    <property type="entry name" value="FATTY ACID SYNTHASE"/>
    <property type="match status" value="1"/>
</dbReference>
<dbReference type="PANTHER" id="PTHR43775:SF37">
    <property type="entry name" value="SI:DKEY-61P9.11"/>
    <property type="match status" value="1"/>
</dbReference>
<dbReference type="Pfam" id="PF00698">
    <property type="entry name" value="Acyl_transf_1"/>
    <property type="match status" value="1"/>
</dbReference>
<dbReference type="Pfam" id="PF22621">
    <property type="entry name" value="CurL-like_PKS_C"/>
    <property type="match status" value="1"/>
</dbReference>
<dbReference type="Pfam" id="PF00109">
    <property type="entry name" value="ketoacyl-synt"/>
    <property type="match status" value="1"/>
</dbReference>
<dbReference type="Pfam" id="PF02801">
    <property type="entry name" value="Ketoacyl-synt_C"/>
    <property type="match status" value="1"/>
</dbReference>
<dbReference type="Pfam" id="PF00550">
    <property type="entry name" value="PP-binding"/>
    <property type="match status" value="2"/>
</dbReference>
<dbReference type="Pfam" id="PF14765">
    <property type="entry name" value="PS-DH"/>
    <property type="match status" value="1"/>
</dbReference>
<dbReference type="Pfam" id="PF16073">
    <property type="entry name" value="SAT"/>
    <property type="match status" value="1"/>
</dbReference>
<dbReference type="Pfam" id="PF00975">
    <property type="entry name" value="Thioesterase"/>
    <property type="match status" value="1"/>
</dbReference>
<dbReference type="SMART" id="SM00827">
    <property type="entry name" value="PKS_AT"/>
    <property type="match status" value="1"/>
</dbReference>
<dbReference type="SMART" id="SM00825">
    <property type="entry name" value="PKS_KS"/>
    <property type="match status" value="1"/>
</dbReference>
<dbReference type="SMART" id="SM00823">
    <property type="entry name" value="PKS_PP"/>
    <property type="match status" value="2"/>
</dbReference>
<dbReference type="SUPFAM" id="SSF47336">
    <property type="entry name" value="ACP-like"/>
    <property type="match status" value="2"/>
</dbReference>
<dbReference type="SUPFAM" id="SSF53474">
    <property type="entry name" value="alpha/beta-Hydrolases"/>
    <property type="match status" value="1"/>
</dbReference>
<dbReference type="SUPFAM" id="SSF52151">
    <property type="entry name" value="FabD/lysophospholipase-like"/>
    <property type="match status" value="1"/>
</dbReference>
<dbReference type="SUPFAM" id="SSF55048">
    <property type="entry name" value="Probable ACP-binding domain of malonyl-CoA ACP transacylase"/>
    <property type="match status" value="1"/>
</dbReference>
<dbReference type="SUPFAM" id="SSF53901">
    <property type="entry name" value="Thiolase-like"/>
    <property type="match status" value="1"/>
</dbReference>
<dbReference type="PROSITE" id="PS50075">
    <property type="entry name" value="CARRIER"/>
    <property type="match status" value="2"/>
</dbReference>
<dbReference type="PROSITE" id="PS00606">
    <property type="entry name" value="KS3_1"/>
    <property type="match status" value="1"/>
</dbReference>
<dbReference type="PROSITE" id="PS52004">
    <property type="entry name" value="KS3_2"/>
    <property type="match status" value="1"/>
</dbReference>
<dbReference type="PROSITE" id="PS00012">
    <property type="entry name" value="PHOSPHOPANTETHEINE"/>
    <property type="match status" value="1"/>
</dbReference>
<dbReference type="PROSITE" id="PS52019">
    <property type="entry name" value="PKS_MFAS_DH"/>
    <property type="match status" value="1"/>
</dbReference>